<dbReference type="EMBL" id="CR626927">
    <property type="protein sequence ID" value="CAH06575.1"/>
    <property type="molecule type" value="Genomic_DNA"/>
</dbReference>
<dbReference type="RefSeq" id="WP_005785133.1">
    <property type="nucleotide sequence ID" value="NZ_UFTH01000001.1"/>
</dbReference>
<dbReference type="SMR" id="Q5LH11"/>
<dbReference type="PaxDb" id="272559-BF9343_0794"/>
<dbReference type="GeneID" id="60369497"/>
<dbReference type="KEGG" id="bfs:BF9343_0794"/>
<dbReference type="eggNOG" id="COG0216">
    <property type="taxonomic scope" value="Bacteria"/>
</dbReference>
<dbReference type="HOGENOM" id="CLU_036856_0_1_10"/>
<dbReference type="Proteomes" id="UP000006731">
    <property type="component" value="Chromosome"/>
</dbReference>
<dbReference type="GO" id="GO:0005737">
    <property type="term" value="C:cytoplasm"/>
    <property type="evidence" value="ECO:0007669"/>
    <property type="project" value="UniProtKB-SubCell"/>
</dbReference>
<dbReference type="GO" id="GO:0016149">
    <property type="term" value="F:translation release factor activity, codon specific"/>
    <property type="evidence" value="ECO:0007669"/>
    <property type="project" value="UniProtKB-UniRule"/>
</dbReference>
<dbReference type="FunFam" id="3.30.70.1660:FF:000002">
    <property type="entry name" value="Peptide chain release factor 1"/>
    <property type="match status" value="1"/>
</dbReference>
<dbReference type="FunFam" id="3.30.70.1660:FF:000010">
    <property type="entry name" value="Peptide chain release factor 1"/>
    <property type="match status" value="1"/>
</dbReference>
<dbReference type="FunFam" id="3.30.160.20:FF:000040">
    <property type="entry name" value="Peptide chain release factor 2"/>
    <property type="match status" value="1"/>
</dbReference>
<dbReference type="Gene3D" id="3.30.160.20">
    <property type="match status" value="1"/>
</dbReference>
<dbReference type="Gene3D" id="3.30.70.1660">
    <property type="match status" value="1"/>
</dbReference>
<dbReference type="Gene3D" id="6.10.140.1950">
    <property type="match status" value="1"/>
</dbReference>
<dbReference type="HAMAP" id="MF_00093">
    <property type="entry name" value="Rel_fac_1"/>
    <property type="match status" value="1"/>
</dbReference>
<dbReference type="InterPro" id="IPR005139">
    <property type="entry name" value="PCRF"/>
</dbReference>
<dbReference type="InterPro" id="IPR000352">
    <property type="entry name" value="Pep_chain_release_fac_I"/>
</dbReference>
<dbReference type="InterPro" id="IPR045853">
    <property type="entry name" value="Pep_chain_release_fac_I_sf"/>
</dbReference>
<dbReference type="InterPro" id="IPR050057">
    <property type="entry name" value="Prokaryotic/Mito_RF"/>
</dbReference>
<dbReference type="InterPro" id="IPR004373">
    <property type="entry name" value="RF-1"/>
</dbReference>
<dbReference type="NCBIfam" id="TIGR00019">
    <property type="entry name" value="prfA"/>
    <property type="match status" value="1"/>
</dbReference>
<dbReference type="NCBIfam" id="NF001859">
    <property type="entry name" value="PRK00591.1"/>
    <property type="match status" value="1"/>
</dbReference>
<dbReference type="PANTHER" id="PTHR43804">
    <property type="entry name" value="LD18447P"/>
    <property type="match status" value="1"/>
</dbReference>
<dbReference type="PANTHER" id="PTHR43804:SF7">
    <property type="entry name" value="LD18447P"/>
    <property type="match status" value="1"/>
</dbReference>
<dbReference type="Pfam" id="PF03462">
    <property type="entry name" value="PCRF"/>
    <property type="match status" value="1"/>
</dbReference>
<dbReference type="Pfam" id="PF00472">
    <property type="entry name" value="RF-1"/>
    <property type="match status" value="1"/>
</dbReference>
<dbReference type="SMART" id="SM00937">
    <property type="entry name" value="PCRF"/>
    <property type="match status" value="1"/>
</dbReference>
<dbReference type="SUPFAM" id="SSF75620">
    <property type="entry name" value="Release factor"/>
    <property type="match status" value="1"/>
</dbReference>
<dbReference type="PROSITE" id="PS00745">
    <property type="entry name" value="RF_PROK_I"/>
    <property type="match status" value="1"/>
</dbReference>
<comment type="function">
    <text evidence="1">Peptide chain release factor 1 directs the termination of translation in response to the peptide chain termination codons UAG and UAA.</text>
</comment>
<comment type="subcellular location">
    <subcellularLocation>
        <location evidence="1">Cytoplasm</location>
    </subcellularLocation>
</comment>
<comment type="PTM">
    <text evidence="1">Methylated by PrmC. Methylation increases the termination efficiency of RF1.</text>
</comment>
<comment type="similarity">
    <text evidence="1">Belongs to the prokaryotic/mitochondrial release factor family.</text>
</comment>
<organism>
    <name type="scientific">Bacteroides fragilis (strain ATCC 25285 / DSM 2151 / CCUG 4856 / JCM 11019 / LMG 10263 / NCTC 9343 / Onslow / VPI 2553 / EN-2)</name>
    <dbReference type="NCBI Taxonomy" id="272559"/>
    <lineage>
        <taxon>Bacteria</taxon>
        <taxon>Pseudomonadati</taxon>
        <taxon>Bacteroidota</taxon>
        <taxon>Bacteroidia</taxon>
        <taxon>Bacteroidales</taxon>
        <taxon>Bacteroidaceae</taxon>
        <taxon>Bacteroides</taxon>
    </lineage>
</organism>
<reference key="1">
    <citation type="journal article" date="2005" name="Science">
        <title>Extensive DNA inversions in the B. fragilis genome control variable gene expression.</title>
        <authorList>
            <person name="Cerdeno-Tarraga A.-M."/>
            <person name="Patrick S."/>
            <person name="Crossman L.C."/>
            <person name="Blakely G."/>
            <person name="Abratt V."/>
            <person name="Lennard N."/>
            <person name="Poxton I."/>
            <person name="Duerden B."/>
            <person name="Harris B."/>
            <person name="Quail M.A."/>
            <person name="Barron A."/>
            <person name="Clark L."/>
            <person name="Corton C."/>
            <person name="Doggett J."/>
            <person name="Holden M.T.G."/>
            <person name="Larke N."/>
            <person name="Line A."/>
            <person name="Lord A."/>
            <person name="Norbertczak H."/>
            <person name="Ormond D."/>
            <person name="Price C."/>
            <person name="Rabbinowitsch E."/>
            <person name="Woodward J."/>
            <person name="Barrell B.G."/>
            <person name="Parkhill J."/>
        </authorList>
    </citation>
    <scope>NUCLEOTIDE SEQUENCE [LARGE SCALE GENOMIC DNA]</scope>
    <source>
        <strain>ATCC 25285 / DSM 2151 / CCUG 4856 / JCM 11019 / LMG 10263 / NCTC 9343 / Onslow / VPI 2553 / EN-2</strain>
    </source>
</reference>
<feature type="chain" id="PRO_0000263235" description="Peptide chain release factor 1">
    <location>
        <begin position="1"/>
        <end position="370"/>
    </location>
</feature>
<feature type="modified residue" description="N5-methylglutamine" evidence="1">
    <location>
        <position position="239"/>
    </location>
</feature>
<proteinExistence type="inferred from homology"/>
<name>RF1_BACFN</name>
<gene>
    <name evidence="1" type="primary">prfA</name>
    <name type="ordered locus">BF0832</name>
</gene>
<sequence>MADNNSILEKLDGLVARFEEVSTLITDPAVIADQKRYVKLTKEYKELDDLMKARKEYMQLLANIEEAKDILSNESDADMREMAKEEMDNSQERLPVLEEEIKLLLVPADPQDGKNAILEIRGGTGGDEAAIFAGDLFRMYAKFCETKGWKMEVSSANEGAAGGYKEIICSVTGDNVYGTLKYESGVHRVQRVPATETQGRVHTSAASVAVLPEAEEFDVVINEGEIKWDTFRSGGAGGQNVNKVESGVRLRYIWKNPNTGVAEEILIECTETRDQPKNKERALARLRTFIYDKEHQKYIDDIASKRKTMVSTGDRSAKIRTYNYPQGRITDHRINYTIYNLAAFMDGDIQECIDKLTVAENAERLKESEL</sequence>
<accession>Q5LH11</accession>
<evidence type="ECO:0000255" key="1">
    <source>
        <dbReference type="HAMAP-Rule" id="MF_00093"/>
    </source>
</evidence>
<keyword id="KW-0963">Cytoplasm</keyword>
<keyword id="KW-0488">Methylation</keyword>
<keyword id="KW-0648">Protein biosynthesis</keyword>
<protein>
    <recommendedName>
        <fullName evidence="1">Peptide chain release factor 1</fullName>
        <shortName evidence="1">RF-1</shortName>
    </recommendedName>
</protein>